<name>RL34_STRP4</name>
<sequence>MKRTYQPSKLRRARKHGFRNRMSTKNGRRVLAARRRKGRKVLAA</sequence>
<evidence type="ECO:0000255" key="1">
    <source>
        <dbReference type="HAMAP-Rule" id="MF_00391"/>
    </source>
</evidence>
<evidence type="ECO:0000256" key="2">
    <source>
        <dbReference type="SAM" id="MobiDB-lite"/>
    </source>
</evidence>
<evidence type="ECO:0000305" key="3"/>
<protein>
    <recommendedName>
        <fullName evidence="1">Large ribosomal subunit protein bL34</fullName>
    </recommendedName>
    <alternativeName>
        <fullName evidence="3">50S ribosomal protein L34</fullName>
    </alternativeName>
</protein>
<gene>
    <name evidence="1" type="primary">rpmH</name>
    <name type="ordered locus">SPG_1895</name>
</gene>
<dbReference type="EMBL" id="CP001015">
    <property type="protein sequence ID" value="ACF56612.1"/>
    <property type="molecule type" value="Genomic_DNA"/>
</dbReference>
<dbReference type="SMR" id="B5E2I5"/>
<dbReference type="KEGG" id="spx:SPG_1895"/>
<dbReference type="HOGENOM" id="CLU_129938_2_0_9"/>
<dbReference type="GO" id="GO:1990904">
    <property type="term" value="C:ribonucleoprotein complex"/>
    <property type="evidence" value="ECO:0007669"/>
    <property type="project" value="UniProtKB-KW"/>
</dbReference>
<dbReference type="GO" id="GO:0005840">
    <property type="term" value="C:ribosome"/>
    <property type="evidence" value="ECO:0007669"/>
    <property type="project" value="UniProtKB-KW"/>
</dbReference>
<dbReference type="GO" id="GO:0003735">
    <property type="term" value="F:structural constituent of ribosome"/>
    <property type="evidence" value="ECO:0007669"/>
    <property type="project" value="InterPro"/>
</dbReference>
<dbReference type="GO" id="GO:0006412">
    <property type="term" value="P:translation"/>
    <property type="evidence" value="ECO:0007669"/>
    <property type="project" value="UniProtKB-UniRule"/>
</dbReference>
<dbReference type="FunFam" id="1.10.287.3980:FF:000001">
    <property type="entry name" value="Mitochondrial ribosomal protein L34"/>
    <property type="match status" value="1"/>
</dbReference>
<dbReference type="Gene3D" id="1.10.287.3980">
    <property type="match status" value="1"/>
</dbReference>
<dbReference type="HAMAP" id="MF_00391">
    <property type="entry name" value="Ribosomal_bL34"/>
    <property type="match status" value="1"/>
</dbReference>
<dbReference type="InterPro" id="IPR000271">
    <property type="entry name" value="Ribosomal_bL34"/>
</dbReference>
<dbReference type="InterPro" id="IPR020939">
    <property type="entry name" value="Ribosomal_bL34_CS"/>
</dbReference>
<dbReference type="NCBIfam" id="TIGR01030">
    <property type="entry name" value="rpmH_bact"/>
    <property type="match status" value="1"/>
</dbReference>
<dbReference type="PANTHER" id="PTHR14503:SF4">
    <property type="entry name" value="LARGE RIBOSOMAL SUBUNIT PROTEIN BL34M"/>
    <property type="match status" value="1"/>
</dbReference>
<dbReference type="PANTHER" id="PTHR14503">
    <property type="entry name" value="MITOCHONDRIAL RIBOSOMAL PROTEIN 34 FAMILY MEMBER"/>
    <property type="match status" value="1"/>
</dbReference>
<dbReference type="Pfam" id="PF00468">
    <property type="entry name" value="Ribosomal_L34"/>
    <property type="match status" value="1"/>
</dbReference>
<dbReference type="PROSITE" id="PS00784">
    <property type="entry name" value="RIBOSOMAL_L34"/>
    <property type="match status" value="1"/>
</dbReference>
<reference key="1">
    <citation type="journal article" date="2001" name="Microb. Drug Resist.">
        <title>Annotated draft genomic sequence from a Streptococcus pneumoniae type 19F clinical isolate.</title>
        <authorList>
            <person name="Dopazo J."/>
            <person name="Mendoza A."/>
            <person name="Herrero J."/>
            <person name="Caldara F."/>
            <person name="Humbert Y."/>
            <person name="Friedli L."/>
            <person name="Guerrier M."/>
            <person name="Grand-Schenk E."/>
            <person name="Gandin C."/>
            <person name="de Francesco M."/>
            <person name="Polissi A."/>
            <person name="Buell G."/>
            <person name="Feger G."/>
            <person name="Garcia E."/>
            <person name="Peitsch M."/>
            <person name="Garcia-Bustos J.F."/>
        </authorList>
    </citation>
    <scope>NUCLEOTIDE SEQUENCE [LARGE SCALE GENOMIC DNA]</scope>
    <source>
        <strain>G54</strain>
    </source>
</reference>
<reference key="2">
    <citation type="submission" date="2008-03" db="EMBL/GenBank/DDBJ databases">
        <title>Pneumococcal beta glucoside metabolism investigated by whole genome comparison.</title>
        <authorList>
            <person name="Mulas L."/>
            <person name="Trappetti C."/>
            <person name="Hakenbeck R."/>
            <person name="Iannelli F."/>
            <person name="Pozzi G."/>
            <person name="Davidsen T.M."/>
            <person name="Tettelin H."/>
            <person name="Oggioni M."/>
        </authorList>
    </citation>
    <scope>NUCLEOTIDE SEQUENCE [LARGE SCALE GENOMIC DNA]</scope>
    <source>
        <strain>G54</strain>
    </source>
</reference>
<comment type="similarity">
    <text evidence="1">Belongs to the bacterial ribosomal protein bL34 family.</text>
</comment>
<accession>B5E2I5</accession>
<organism>
    <name type="scientific">Streptococcus pneumoniae serotype 19F (strain G54)</name>
    <dbReference type="NCBI Taxonomy" id="512566"/>
    <lineage>
        <taxon>Bacteria</taxon>
        <taxon>Bacillati</taxon>
        <taxon>Bacillota</taxon>
        <taxon>Bacilli</taxon>
        <taxon>Lactobacillales</taxon>
        <taxon>Streptococcaceae</taxon>
        <taxon>Streptococcus</taxon>
    </lineage>
</organism>
<keyword id="KW-0687">Ribonucleoprotein</keyword>
<keyword id="KW-0689">Ribosomal protein</keyword>
<feature type="chain" id="PRO_1000196124" description="Large ribosomal subunit protein bL34">
    <location>
        <begin position="1"/>
        <end position="44"/>
    </location>
</feature>
<feature type="region of interest" description="Disordered" evidence="2">
    <location>
        <begin position="1"/>
        <end position="44"/>
    </location>
</feature>
<feature type="compositionally biased region" description="Basic residues" evidence="2">
    <location>
        <begin position="1"/>
        <end position="19"/>
    </location>
</feature>
<feature type="compositionally biased region" description="Basic residues" evidence="2">
    <location>
        <begin position="26"/>
        <end position="44"/>
    </location>
</feature>
<proteinExistence type="inferred from homology"/>